<gene>
    <name evidence="1" type="primary">atpD</name>
    <name type="ordered locus">YE4206</name>
</gene>
<proteinExistence type="inferred from homology"/>
<comment type="function">
    <text evidence="1">Produces ATP from ADP in the presence of a proton gradient across the membrane. The catalytic sites are hosted primarily by the beta subunits.</text>
</comment>
<comment type="catalytic activity">
    <reaction evidence="1">
        <text>ATP + H2O + 4 H(+)(in) = ADP + phosphate + 5 H(+)(out)</text>
        <dbReference type="Rhea" id="RHEA:57720"/>
        <dbReference type="ChEBI" id="CHEBI:15377"/>
        <dbReference type="ChEBI" id="CHEBI:15378"/>
        <dbReference type="ChEBI" id="CHEBI:30616"/>
        <dbReference type="ChEBI" id="CHEBI:43474"/>
        <dbReference type="ChEBI" id="CHEBI:456216"/>
        <dbReference type="EC" id="7.1.2.2"/>
    </reaction>
</comment>
<comment type="subunit">
    <text evidence="1">F-type ATPases have 2 components, CF(1) - the catalytic core - and CF(0) - the membrane proton channel. CF(1) has five subunits: alpha(3), beta(3), gamma(1), delta(1), epsilon(1). CF(0) has three main subunits: a(1), b(2) and c(9-12). The alpha and beta chains form an alternating ring which encloses part of the gamma chain. CF(1) is attached to CF(0) by a central stalk formed by the gamma and epsilon chains, while a peripheral stalk is formed by the delta and b chains.</text>
</comment>
<comment type="subcellular location">
    <subcellularLocation>
        <location evidence="1">Cell inner membrane</location>
        <topology evidence="1">Peripheral membrane protein</topology>
    </subcellularLocation>
</comment>
<comment type="similarity">
    <text evidence="1">Belongs to the ATPase alpha/beta chains family.</text>
</comment>
<name>ATPB_YERE8</name>
<accession>A1JTC6</accession>
<organism>
    <name type="scientific">Yersinia enterocolitica serotype O:8 / biotype 1B (strain NCTC 13174 / 8081)</name>
    <dbReference type="NCBI Taxonomy" id="393305"/>
    <lineage>
        <taxon>Bacteria</taxon>
        <taxon>Pseudomonadati</taxon>
        <taxon>Pseudomonadota</taxon>
        <taxon>Gammaproteobacteria</taxon>
        <taxon>Enterobacterales</taxon>
        <taxon>Yersiniaceae</taxon>
        <taxon>Yersinia</taxon>
    </lineage>
</organism>
<evidence type="ECO:0000255" key="1">
    <source>
        <dbReference type="HAMAP-Rule" id="MF_01347"/>
    </source>
</evidence>
<sequence length="460" mass="50067">MATGKIIQVIGAVVDVEFPQDAVPKVYNALEVEGAAEKLVLEVQQQLGGGVVRCIAMGSSDGLSRGLKVINLEHPIEVPVGKSTLGRIMNVLGDPIDMKGPIGEEERWAIHREAPSYEDLASSQDLLETGIKVMDLICPFAKGGKVGLFGGAGVGKTVNMMELIRNIAIEHSGYSVFAGVGERTREGNDFYHEMTDSNVLDKVSLVYGQMNEPPGNRLRVALTGLTMAEKFRDEGRDVLLFIDNIYRYTLAGTEVSALLGRMPSAVGYQPTLAEEMGVLQERITSTKTGSITSVQAVYVPADDLTDPSPATTFAHLDATVVLSRQIASLGIYPAVDPLDSTSRQLDPLVVGQEHYDVARGVQSILQRYQELKDIIAILGMDELSEDDKLVVSRARKIQRFLSQPFFVAEVFTGSPGKFVSLKDTIRGFKGIMNGDYDHLPEQAFYMVGTIEEAVEKAKKL</sequence>
<dbReference type="EC" id="7.1.2.2" evidence="1"/>
<dbReference type="EMBL" id="AM286415">
    <property type="protein sequence ID" value="CAL14220.1"/>
    <property type="molecule type" value="Genomic_DNA"/>
</dbReference>
<dbReference type="RefSeq" id="WP_005161168.1">
    <property type="nucleotide sequence ID" value="NC_008800.1"/>
</dbReference>
<dbReference type="RefSeq" id="YP_001008338.1">
    <property type="nucleotide sequence ID" value="NC_008800.1"/>
</dbReference>
<dbReference type="SMR" id="A1JTC6"/>
<dbReference type="GeneID" id="93971158"/>
<dbReference type="KEGG" id="yen:YE4206"/>
<dbReference type="PATRIC" id="fig|393305.7.peg.4472"/>
<dbReference type="eggNOG" id="COG0055">
    <property type="taxonomic scope" value="Bacteria"/>
</dbReference>
<dbReference type="HOGENOM" id="CLU_022398_0_2_6"/>
<dbReference type="OrthoDB" id="9801639at2"/>
<dbReference type="Proteomes" id="UP000000642">
    <property type="component" value="Chromosome"/>
</dbReference>
<dbReference type="GO" id="GO:0005886">
    <property type="term" value="C:plasma membrane"/>
    <property type="evidence" value="ECO:0007669"/>
    <property type="project" value="UniProtKB-SubCell"/>
</dbReference>
<dbReference type="GO" id="GO:0045259">
    <property type="term" value="C:proton-transporting ATP synthase complex"/>
    <property type="evidence" value="ECO:0007669"/>
    <property type="project" value="UniProtKB-KW"/>
</dbReference>
<dbReference type="GO" id="GO:0005524">
    <property type="term" value="F:ATP binding"/>
    <property type="evidence" value="ECO:0007669"/>
    <property type="project" value="UniProtKB-UniRule"/>
</dbReference>
<dbReference type="GO" id="GO:0016887">
    <property type="term" value="F:ATP hydrolysis activity"/>
    <property type="evidence" value="ECO:0007669"/>
    <property type="project" value="InterPro"/>
</dbReference>
<dbReference type="GO" id="GO:0046933">
    <property type="term" value="F:proton-transporting ATP synthase activity, rotational mechanism"/>
    <property type="evidence" value="ECO:0007669"/>
    <property type="project" value="UniProtKB-UniRule"/>
</dbReference>
<dbReference type="CDD" id="cd18110">
    <property type="entry name" value="ATP-synt_F1_beta_C"/>
    <property type="match status" value="1"/>
</dbReference>
<dbReference type="CDD" id="cd18115">
    <property type="entry name" value="ATP-synt_F1_beta_N"/>
    <property type="match status" value="1"/>
</dbReference>
<dbReference type="CDD" id="cd01133">
    <property type="entry name" value="F1-ATPase_beta_CD"/>
    <property type="match status" value="1"/>
</dbReference>
<dbReference type="FunFam" id="1.10.1140.10:FF:000001">
    <property type="entry name" value="ATP synthase subunit beta"/>
    <property type="match status" value="1"/>
</dbReference>
<dbReference type="FunFam" id="2.40.10.170:FF:000003">
    <property type="entry name" value="ATP synthase subunit beta"/>
    <property type="match status" value="1"/>
</dbReference>
<dbReference type="FunFam" id="3.40.50.300:FF:000004">
    <property type="entry name" value="ATP synthase subunit beta"/>
    <property type="match status" value="1"/>
</dbReference>
<dbReference type="Gene3D" id="2.40.10.170">
    <property type="match status" value="1"/>
</dbReference>
<dbReference type="Gene3D" id="1.10.1140.10">
    <property type="entry name" value="Bovine Mitochondrial F1-atpase, Atp Synthase Beta Chain, Chain D, domain 3"/>
    <property type="match status" value="1"/>
</dbReference>
<dbReference type="Gene3D" id="3.40.50.300">
    <property type="entry name" value="P-loop containing nucleotide triphosphate hydrolases"/>
    <property type="match status" value="1"/>
</dbReference>
<dbReference type="HAMAP" id="MF_01347">
    <property type="entry name" value="ATP_synth_beta_bact"/>
    <property type="match status" value="1"/>
</dbReference>
<dbReference type="InterPro" id="IPR003593">
    <property type="entry name" value="AAA+_ATPase"/>
</dbReference>
<dbReference type="InterPro" id="IPR055190">
    <property type="entry name" value="ATP-synt_VA_C"/>
</dbReference>
<dbReference type="InterPro" id="IPR005722">
    <property type="entry name" value="ATP_synth_F1_bsu"/>
</dbReference>
<dbReference type="InterPro" id="IPR020003">
    <property type="entry name" value="ATPase_a/bsu_AS"/>
</dbReference>
<dbReference type="InterPro" id="IPR050053">
    <property type="entry name" value="ATPase_alpha/beta_chains"/>
</dbReference>
<dbReference type="InterPro" id="IPR004100">
    <property type="entry name" value="ATPase_F1/V1/A1_a/bsu_N"/>
</dbReference>
<dbReference type="InterPro" id="IPR036121">
    <property type="entry name" value="ATPase_F1/V1/A1_a/bsu_N_sf"/>
</dbReference>
<dbReference type="InterPro" id="IPR000194">
    <property type="entry name" value="ATPase_F1/V1/A1_a/bsu_nucl-bd"/>
</dbReference>
<dbReference type="InterPro" id="IPR024034">
    <property type="entry name" value="ATPase_F1/V1_b/a_C"/>
</dbReference>
<dbReference type="InterPro" id="IPR027417">
    <property type="entry name" value="P-loop_NTPase"/>
</dbReference>
<dbReference type="NCBIfam" id="TIGR01039">
    <property type="entry name" value="atpD"/>
    <property type="match status" value="1"/>
</dbReference>
<dbReference type="PANTHER" id="PTHR15184">
    <property type="entry name" value="ATP SYNTHASE"/>
    <property type="match status" value="1"/>
</dbReference>
<dbReference type="PANTHER" id="PTHR15184:SF71">
    <property type="entry name" value="ATP SYNTHASE SUBUNIT BETA, MITOCHONDRIAL"/>
    <property type="match status" value="1"/>
</dbReference>
<dbReference type="Pfam" id="PF00006">
    <property type="entry name" value="ATP-synt_ab"/>
    <property type="match status" value="1"/>
</dbReference>
<dbReference type="Pfam" id="PF02874">
    <property type="entry name" value="ATP-synt_ab_N"/>
    <property type="match status" value="1"/>
</dbReference>
<dbReference type="Pfam" id="PF22919">
    <property type="entry name" value="ATP-synt_VA_C"/>
    <property type="match status" value="1"/>
</dbReference>
<dbReference type="SMART" id="SM00382">
    <property type="entry name" value="AAA"/>
    <property type="match status" value="1"/>
</dbReference>
<dbReference type="SUPFAM" id="SSF47917">
    <property type="entry name" value="C-terminal domain of alpha and beta subunits of F1 ATP synthase"/>
    <property type="match status" value="1"/>
</dbReference>
<dbReference type="SUPFAM" id="SSF50615">
    <property type="entry name" value="N-terminal domain of alpha and beta subunits of F1 ATP synthase"/>
    <property type="match status" value="1"/>
</dbReference>
<dbReference type="SUPFAM" id="SSF52540">
    <property type="entry name" value="P-loop containing nucleoside triphosphate hydrolases"/>
    <property type="match status" value="1"/>
</dbReference>
<dbReference type="PROSITE" id="PS00152">
    <property type="entry name" value="ATPASE_ALPHA_BETA"/>
    <property type="match status" value="1"/>
</dbReference>
<reference key="1">
    <citation type="journal article" date="2006" name="PLoS Genet.">
        <title>The complete genome sequence and comparative genome analysis of the high pathogenicity Yersinia enterocolitica strain 8081.</title>
        <authorList>
            <person name="Thomson N.R."/>
            <person name="Howard S."/>
            <person name="Wren B.W."/>
            <person name="Holden M.T.G."/>
            <person name="Crossman L."/>
            <person name="Challis G.L."/>
            <person name="Churcher C."/>
            <person name="Mungall K."/>
            <person name="Brooks K."/>
            <person name="Chillingworth T."/>
            <person name="Feltwell T."/>
            <person name="Abdellah Z."/>
            <person name="Hauser H."/>
            <person name="Jagels K."/>
            <person name="Maddison M."/>
            <person name="Moule S."/>
            <person name="Sanders M."/>
            <person name="Whitehead S."/>
            <person name="Quail M.A."/>
            <person name="Dougan G."/>
            <person name="Parkhill J."/>
            <person name="Prentice M.B."/>
        </authorList>
    </citation>
    <scope>NUCLEOTIDE SEQUENCE [LARGE SCALE GENOMIC DNA]</scope>
    <source>
        <strain>NCTC 13174 / 8081</strain>
    </source>
</reference>
<protein>
    <recommendedName>
        <fullName evidence="1">ATP synthase subunit beta</fullName>
        <ecNumber evidence="1">7.1.2.2</ecNumber>
    </recommendedName>
    <alternativeName>
        <fullName evidence="1">ATP synthase F1 sector subunit beta</fullName>
    </alternativeName>
    <alternativeName>
        <fullName evidence="1">F-ATPase subunit beta</fullName>
    </alternativeName>
</protein>
<keyword id="KW-0066">ATP synthesis</keyword>
<keyword id="KW-0067">ATP-binding</keyword>
<keyword id="KW-0997">Cell inner membrane</keyword>
<keyword id="KW-1003">Cell membrane</keyword>
<keyword id="KW-0139">CF(1)</keyword>
<keyword id="KW-0375">Hydrogen ion transport</keyword>
<keyword id="KW-0406">Ion transport</keyword>
<keyword id="KW-0472">Membrane</keyword>
<keyword id="KW-0547">Nucleotide-binding</keyword>
<keyword id="KW-1278">Translocase</keyword>
<keyword id="KW-0813">Transport</keyword>
<feature type="chain" id="PRO_1000055180" description="ATP synthase subunit beta">
    <location>
        <begin position="1"/>
        <end position="460"/>
    </location>
</feature>
<feature type="binding site" evidence="1">
    <location>
        <begin position="150"/>
        <end position="157"/>
    </location>
    <ligand>
        <name>ATP</name>
        <dbReference type="ChEBI" id="CHEBI:30616"/>
    </ligand>
</feature>